<protein>
    <recommendedName>
        <fullName evidence="1">Lon protease 1</fullName>
        <ecNumber evidence="1">3.4.21.53</ecNumber>
    </recommendedName>
    <alternativeName>
        <fullName evidence="1">ATP-dependent protease La 1</fullName>
    </alternativeName>
</protein>
<dbReference type="EC" id="3.4.21.53" evidence="1"/>
<dbReference type="EMBL" id="L77216">
    <property type="protein sequence ID" value="AAB72011.1"/>
    <property type="molecule type" value="Genomic_DNA"/>
</dbReference>
<dbReference type="EMBL" id="AE000783">
    <property type="protein sequence ID" value="AAB91493.1"/>
    <property type="molecule type" value="Genomic_DNA"/>
</dbReference>
<dbReference type="PIR" id="E70131">
    <property type="entry name" value="E70131"/>
</dbReference>
<dbReference type="RefSeq" id="NP_212387.1">
    <property type="nucleotide sequence ID" value="NC_001318.1"/>
</dbReference>
<dbReference type="SMR" id="Q59185"/>
<dbReference type="STRING" id="224326.BB_0253"/>
<dbReference type="PaxDb" id="224326-BB_0253"/>
<dbReference type="EnsemblBacteria" id="AAB91493">
    <property type="protein sequence ID" value="AAB91493"/>
    <property type="gene ID" value="BB_0253"/>
</dbReference>
<dbReference type="KEGG" id="bbu:BB_0253"/>
<dbReference type="PATRIC" id="fig|224326.49.peg.652"/>
<dbReference type="HOGENOM" id="CLU_004109_4_3_12"/>
<dbReference type="OrthoDB" id="9803599at2"/>
<dbReference type="BRENDA" id="3.4.21.53">
    <property type="organism ID" value="902"/>
</dbReference>
<dbReference type="PHI-base" id="PHI:11477"/>
<dbReference type="Proteomes" id="UP000001807">
    <property type="component" value="Chromosome"/>
</dbReference>
<dbReference type="GO" id="GO:0005737">
    <property type="term" value="C:cytoplasm"/>
    <property type="evidence" value="ECO:0007669"/>
    <property type="project" value="UniProtKB-SubCell"/>
</dbReference>
<dbReference type="GO" id="GO:0005524">
    <property type="term" value="F:ATP binding"/>
    <property type="evidence" value="ECO:0007669"/>
    <property type="project" value="UniProtKB-UniRule"/>
</dbReference>
<dbReference type="GO" id="GO:0016887">
    <property type="term" value="F:ATP hydrolysis activity"/>
    <property type="evidence" value="ECO:0007669"/>
    <property type="project" value="UniProtKB-UniRule"/>
</dbReference>
<dbReference type="GO" id="GO:0004176">
    <property type="term" value="F:ATP-dependent peptidase activity"/>
    <property type="evidence" value="ECO:0007669"/>
    <property type="project" value="UniProtKB-UniRule"/>
</dbReference>
<dbReference type="GO" id="GO:0043565">
    <property type="term" value="F:sequence-specific DNA binding"/>
    <property type="evidence" value="ECO:0007669"/>
    <property type="project" value="UniProtKB-UniRule"/>
</dbReference>
<dbReference type="GO" id="GO:0004252">
    <property type="term" value="F:serine-type endopeptidase activity"/>
    <property type="evidence" value="ECO:0007669"/>
    <property type="project" value="UniProtKB-UniRule"/>
</dbReference>
<dbReference type="GO" id="GO:0034605">
    <property type="term" value="P:cellular response to heat"/>
    <property type="evidence" value="ECO:0007669"/>
    <property type="project" value="UniProtKB-UniRule"/>
</dbReference>
<dbReference type="GO" id="GO:0006515">
    <property type="term" value="P:protein quality control for misfolded or incompletely synthesized proteins"/>
    <property type="evidence" value="ECO:0007669"/>
    <property type="project" value="UniProtKB-UniRule"/>
</dbReference>
<dbReference type="CDD" id="cd19500">
    <property type="entry name" value="RecA-like_Lon"/>
    <property type="match status" value="1"/>
</dbReference>
<dbReference type="FunFam" id="3.40.50.300:FF:000021">
    <property type="entry name" value="Lon protease homolog"/>
    <property type="match status" value="1"/>
</dbReference>
<dbReference type="Gene3D" id="1.10.8.60">
    <property type="match status" value="1"/>
</dbReference>
<dbReference type="Gene3D" id="1.20.5.5270">
    <property type="match status" value="1"/>
</dbReference>
<dbReference type="Gene3D" id="1.20.58.1480">
    <property type="match status" value="1"/>
</dbReference>
<dbReference type="Gene3D" id="3.30.230.10">
    <property type="match status" value="1"/>
</dbReference>
<dbReference type="Gene3D" id="2.30.130.40">
    <property type="entry name" value="LON domain-like"/>
    <property type="match status" value="1"/>
</dbReference>
<dbReference type="Gene3D" id="3.40.50.300">
    <property type="entry name" value="P-loop containing nucleotide triphosphate hydrolases"/>
    <property type="match status" value="1"/>
</dbReference>
<dbReference type="HAMAP" id="MF_01973">
    <property type="entry name" value="lon_bact"/>
    <property type="match status" value="1"/>
</dbReference>
<dbReference type="InterPro" id="IPR003593">
    <property type="entry name" value="AAA+_ATPase"/>
</dbReference>
<dbReference type="InterPro" id="IPR003959">
    <property type="entry name" value="ATPase_AAA_core"/>
</dbReference>
<dbReference type="InterPro" id="IPR027543">
    <property type="entry name" value="Lon_bac"/>
</dbReference>
<dbReference type="InterPro" id="IPR004815">
    <property type="entry name" value="Lon_bac/euk-typ"/>
</dbReference>
<dbReference type="InterPro" id="IPR054594">
    <property type="entry name" value="Lon_lid"/>
</dbReference>
<dbReference type="InterPro" id="IPR008269">
    <property type="entry name" value="Lon_proteolytic"/>
</dbReference>
<dbReference type="InterPro" id="IPR027065">
    <property type="entry name" value="Lon_Prtase"/>
</dbReference>
<dbReference type="InterPro" id="IPR003111">
    <property type="entry name" value="Lon_prtase_N"/>
</dbReference>
<dbReference type="InterPro" id="IPR046336">
    <property type="entry name" value="Lon_prtase_N_sf"/>
</dbReference>
<dbReference type="InterPro" id="IPR027417">
    <property type="entry name" value="P-loop_NTPase"/>
</dbReference>
<dbReference type="InterPro" id="IPR008268">
    <property type="entry name" value="Peptidase_S16_AS"/>
</dbReference>
<dbReference type="InterPro" id="IPR015947">
    <property type="entry name" value="PUA-like_sf"/>
</dbReference>
<dbReference type="InterPro" id="IPR020568">
    <property type="entry name" value="Ribosomal_Su5_D2-typ_SF"/>
</dbReference>
<dbReference type="InterPro" id="IPR014721">
    <property type="entry name" value="Ribsml_uS5_D2-typ_fold_subgr"/>
</dbReference>
<dbReference type="NCBIfam" id="TIGR00763">
    <property type="entry name" value="lon"/>
    <property type="match status" value="1"/>
</dbReference>
<dbReference type="PANTHER" id="PTHR43718">
    <property type="entry name" value="LON PROTEASE"/>
    <property type="match status" value="1"/>
</dbReference>
<dbReference type="PANTHER" id="PTHR43718:SF2">
    <property type="entry name" value="LON PROTEASE HOMOLOG, MITOCHONDRIAL"/>
    <property type="match status" value="1"/>
</dbReference>
<dbReference type="Pfam" id="PF00004">
    <property type="entry name" value="AAA"/>
    <property type="match status" value="1"/>
</dbReference>
<dbReference type="Pfam" id="PF05362">
    <property type="entry name" value="Lon_C"/>
    <property type="match status" value="1"/>
</dbReference>
<dbReference type="Pfam" id="PF22667">
    <property type="entry name" value="Lon_lid"/>
    <property type="match status" value="1"/>
</dbReference>
<dbReference type="Pfam" id="PF02190">
    <property type="entry name" value="LON_substr_bdg"/>
    <property type="match status" value="1"/>
</dbReference>
<dbReference type="PIRSF" id="PIRSF001174">
    <property type="entry name" value="Lon_proteas"/>
    <property type="match status" value="1"/>
</dbReference>
<dbReference type="PRINTS" id="PR00830">
    <property type="entry name" value="ENDOLAPTASE"/>
</dbReference>
<dbReference type="SMART" id="SM00382">
    <property type="entry name" value="AAA"/>
    <property type="match status" value="1"/>
</dbReference>
<dbReference type="SMART" id="SM00464">
    <property type="entry name" value="LON"/>
    <property type="match status" value="1"/>
</dbReference>
<dbReference type="SUPFAM" id="SSF52540">
    <property type="entry name" value="P-loop containing nucleoside triphosphate hydrolases"/>
    <property type="match status" value="1"/>
</dbReference>
<dbReference type="SUPFAM" id="SSF88697">
    <property type="entry name" value="PUA domain-like"/>
    <property type="match status" value="1"/>
</dbReference>
<dbReference type="SUPFAM" id="SSF54211">
    <property type="entry name" value="Ribosomal protein S5 domain 2-like"/>
    <property type="match status" value="1"/>
</dbReference>
<dbReference type="PROSITE" id="PS51787">
    <property type="entry name" value="LON_N"/>
    <property type="match status" value="1"/>
</dbReference>
<dbReference type="PROSITE" id="PS51786">
    <property type="entry name" value="LON_PROTEOLYTIC"/>
    <property type="match status" value="1"/>
</dbReference>
<dbReference type="PROSITE" id="PS01046">
    <property type="entry name" value="LON_SER"/>
    <property type="match status" value="1"/>
</dbReference>
<organism>
    <name type="scientific">Borreliella burgdorferi (strain ATCC 35210 / DSM 4680 / CIP 102532 / B31)</name>
    <name type="common">Borrelia burgdorferi</name>
    <dbReference type="NCBI Taxonomy" id="224326"/>
    <lineage>
        <taxon>Bacteria</taxon>
        <taxon>Pseudomonadati</taxon>
        <taxon>Spirochaetota</taxon>
        <taxon>Spirochaetia</taxon>
        <taxon>Spirochaetales</taxon>
        <taxon>Borreliaceae</taxon>
        <taxon>Borreliella</taxon>
    </lineage>
</organism>
<reference key="1">
    <citation type="journal article" date="1997" name="Gene">
        <title>Cloning and expression of the Borrelia burgdorferi lon gene.</title>
        <authorList>
            <person name="Cloud J.L."/>
            <person name="Marconi R.T."/>
            <person name="Eggers C.H."/>
            <person name="Garon C.F."/>
            <person name="Tilly K."/>
            <person name="Samuels D.S."/>
        </authorList>
    </citation>
    <scope>NUCLEOTIDE SEQUENCE [GENOMIC DNA]</scope>
    <source>
        <strain>ATCC 35210 / DSM 4680 / CIP 102532 / B31</strain>
    </source>
</reference>
<reference key="2">
    <citation type="journal article" date="1997" name="Nature">
        <title>Genomic sequence of a Lyme disease spirochaete, Borrelia burgdorferi.</title>
        <authorList>
            <person name="Fraser C.M."/>
            <person name="Casjens S."/>
            <person name="Huang W.M."/>
            <person name="Sutton G.G."/>
            <person name="Clayton R.A."/>
            <person name="Lathigra R."/>
            <person name="White O."/>
            <person name="Ketchum K.A."/>
            <person name="Dodson R.J."/>
            <person name="Hickey E.K."/>
            <person name="Gwinn M.L."/>
            <person name="Dougherty B.A."/>
            <person name="Tomb J.-F."/>
            <person name="Fleischmann R.D."/>
            <person name="Richardson D.L."/>
            <person name="Peterson J.D."/>
            <person name="Kerlavage A.R."/>
            <person name="Quackenbush J."/>
            <person name="Salzberg S.L."/>
            <person name="Hanson M."/>
            <person name="van Vugt R."/>
            <person name="Palmer N."/>
            <person name="Adams M.D."/>
            <person name="Gocayne J.D."/>
            <person name="Weidman J.F."/>
            <person name="Utterback T.R."/>
            <person name="Watthey L."/>
            <person name="McDonald L.A."/>
            <person name="Artiach P."/>
            <person name="Bowman C."/>
            <person name="Garland S.A."/>
            <person name="Fujii C."/>
            <person name="Cotton M.D."/>
            <person name="Horst K."/>
            <person name="Roberts K.M."/>
            <person name="Hatch B."/>
            <person name="Smith H.O."/>
            <person name="Venter J.C."/>
        </authorList>
    </citation>
    <scope>NUCLEOTIDE SEQUENCE [LARGE SCALE GENOMIC DNA]</scope>
    <source>
        <strain>ATCC 35210 / DSM 4680 / CIP 102532 / B31</strain>
    </source>
</reference>
<name>LON1_BORBU</name>
<gene>
    <name evidence="1" type="primary">lon1</name>
    <name type="ordered locus">BB_0253</name>
</gene>
<evidence type="ECO:0000255" key="1">
    <source>
        <dbReference type="HAMAP-Rule" id="MF_01973"/>
    </source>
</evidence>
<evidence type="ECO:0000255" key="2">
    <source>
        <dbReference type="PROSITE-ProRule" id="PRU01122"/>
    </source>
</evidence>
<evidence type="ECO:0000255" key="3">
    <source>
        <dbReference type="PROSITE-ProRule" id="PRU01123"/>
    </source>
</evidence>
<keyword id="KW-0067">ATP-binding</keyword>
<keyword id="KW-0963">Cytoplasm</keyword>
<keyword id="KW-0378">Hydrolase</keyword>
<keyword id="KW-0547">Nucleotide-binding</keyword>
<keyword id="KW-0645">Protease</keyword>
<keyword id="KW-1185">Reference proteome</keyword>
<keyword id="KW-0720">Serine protease</keyword>
<keyword id="KW-0346">Stress response</keyword>
<comment type="function">
    <text evidence="1">ATP-dependent serine protease that mediates the selective degradation of mutant and abnormal proteins as well as certain short-lived regulatory proteins. Required for cellular homeostasis and for survival from DNA damage and developmental changes induced by stress. Degrades polypeptides processively to yield small peptide fragments that are 5 to 10 amino acids long. Binds to DNA in a double-stranded, site-specific manner.</text>
</comment>
<comment type="catalytic activity">
    <reaction evidence="1">
        <text>Hydrolysis of proteins in presence of ATP.</text>
        <dbReference type="EC" id="3.4.21.53"/>
    </reaction>
</comment>
<comment type="subunit">
    <text evidence="1">Homohexamer. Organized in a ring with a central cavity.</text>
</comment>
<comment type="subcellular location">
    <subcellularLocation>
        <location>Cytoplasm</location>
    </subcellularLocation>
</comment>
<comment type="induction">
    <text evidence="1">By heat shock.</text>
</comment>
<comment type="similarity">
    <text evidence="1">Belongs to the peptidase S16 family.</text>
</comment>
<feature type="chain" id="PRO_0000076118" description="Lon protease 1">
    <location>
        <begin position="1"/>
        <end position="806"/>
    </location>
</feature>
<feature type="domain" description="Lon N-terminal" evidence="3">
    <location>
        <begin position="31"/>
        <end position="235"/>
    </location>
</feature>
<feature type="domain" description="Lon proteolytic" evidence="2">
    <location>
        <begin position="626"/>
        <end position="806"/>
    </location>
</feature>
<feature type="active site" evidence="1">
    <location>
        <position position="714"/>
    </location>
</feature>
<feature type="active site" evidence="1">
    <location>
        <position position="757"/>
    </location>
</feature>
<feature type="binding site" evidence="1">
    <location>
        <begin position="389"/>
        <end position="396"/>
    </location>
    <ligand>
        <name>ATP</name>
        <dbReference type="ChEBI" id="CHEBI:30616"/>
    </ligand>
</feature>
<proteinExistence type="inferred from homology"/>
<sequence length="806" mass="90710">MDESKKARSGDKKKEKAVAGILPHSNKPARVPLIAVPSHPVFPGMFIPIVLISDSDMKAIDYAMKGNGIIALFVLNDKFLEKNNNNAQQKLIIDYSKDIYSVGVTGKIIKKINLPDGGYNIFVSTFDRIKFVKVVLNDKFPIIEIDYLKQIPVRKDDIQSKAVYGSILLRTKEIFAHRKMPEVQLNMVNIEDKGKLCDIVASTISSSKNDHQIVLETLNVKDRLKKVLELIYEELNLIEIQNKIAKGIQERLEKQQKEFFLKEQLKAIKAELGIGDKKSSDLEKLKTKLKALELKGEPLEVVEKELEKFSLLETSSAEYIVVRNYLELITELPWRDFKINFDKLDLQKSKKILDKTHYGMNEVKDRIIEYISVLKLRKTQKGAIILLVGPPGVGKTSIGAAIAKVLRTKFFRFSVGGMRDESEIKGHRRTYVGALPGKIIQGLRITKTNSPVFLIDEVDKISASSYGDPFSVLLEVLDPEQNVRFRDHYLDLPFDISNVFFILTANSVETIPRPLLNRMEIIEISGYIDNEKIEIARKYLIPKVLSENGVDKDSLKFQSSSLVQIAQEYARDNGVRNFEKYLNKIVRKVARKLIENTEVKSYQISNDNLEEYVGVPVFRKESMPNAMYSGMVMGLAWTNYGGSTLMIETVKTESKVGGIKLTGRLGDVMKESANIAYTYVNSIKGDLSISKSFFEKNIIHLHIPEGATPKDGPSAGITIASAFISLALNKVVRPHLAMTGELSLTGNVMMIGGLKEKIIAAKRSGVEHIIVPKANRVDLEEIPTNIKSGINFYLVDNMREVIKLLF</sequence>
<accession>Q59185</accession>